<gene>
    <name evidence="1" type="primary">hypA</name>
    <name type="ordered locus">AFE_3287</name>
</gene>
<comment type="function">
    <text evidence="1">Involved in the maturation of [NiFe] hydrogenases. Required for nickel insertion into the metal center of the hydrogenase.</text>
</comment>
<comment type="similarity">
    <text evidence="1">Belongs to the HypA/HybF family.</text>
</comment>
<feature type="chain" id="PRO_1000190723" description="Hydrogenase maturation factor HypA">
    <location>
        <begin position="1"/>
        <end position="113"/>
    </location>
</feature>
<feature type="binding site" evidence="1">
    <location>
        <position position="2"/>
    </location>
    <ligand>
        <name>Ni(2+)</name>
        <dbReference type="ChEBI" id="CHEBI:49786"/>
    </ligand>
</feature>
<feature type="binding site" evidence="1">
    <location>
        <position position="73"/>
    </location>
    <ligand>
        <name>Zn(2+)</name>
        <dbReference type="ChEBI" id="CHEBI:29105"/>
    </ligand>
</feature>
<feature type="binding site" evidence="1">
    <location>
        <position position="76"/>
    </location>
    <ligand>
        <name>Zn(2+)</name>
        <dbReference type="ChEBI" id="CHEBI:29105"/>
    </ligand>
</feature>
<feature type="binding site" evidence="1">
    <location>
        <position position="89"/>
    </location>
    <ligand>
        <name>Zn(2+)</name>
        <dbReference type="ChEBI" id="CHEBI:29105"/>
    </ligand>
</feature>
<feature type="binding site" evidence="1">
    <location>
        <position position="92"/>
    </location>
    <ligand>
        <name>Zn(2+)</name>
        <dbReference type="ChEBI" id="CHEBI:29105"/>
    </ligand>
</feature>
<protein>
    <recommendedName>
        <fullName evidence="1">Hydrogenase maturation factor HypA</fullName>
    </recommendedName>
</protein>
<proteinExistence type="inferred from homology"/>
<sequence>MHELSLCEGILQILEEQSRTQGFIQVHRVCLEIGALASVEPEALRFHFDVVTQGTLAEGSHLEIVTVPAQAWCLPCGEKVSVGQYFDACPQCGSRQLQVIAGEELRIQQLEVE</sequence>
<name>HYPA_ACIF2</name>
<organism>
    <name type="scientific">Acidithiobacillus ferrooxidans (strain ATCC 23270 / DSM 14882 / CIP 104768 / NCIMB 8455)</name>
    <name type="common">Ferrobacillus ferrooxidans (strain ATCC 23270)</name>
    <dbReference type="NCBI Taxonomy" id="243159"/>
    <lineage>
        <taxon>Bacteria</taxon>
        <taxon>Pseudomonadati</taxon>
        <taxon>Pseudomonadota</taxon>
        <taxon>Acidithiobacillia</taxon>
        <taxon>Acidithiobacillales</taxon>
        <taxon>Acidithiobacillaceae</taxon>
        <taxon>Acidithiobacillus</taxon>
    </lineage>
</organism>
<reference key="1">
    <citation type="journal article" date="2008" name="BMC Genomics">
        <title>Acidithiobacillus ferrooxidans metabolism: from genome sequence to industrial applications.</title>
        <authorList>
            <person name="Valdes J."/>
            <person name="Pedroso I."/>
            <person name="Quatrini R."/>
            <person name="Dodson R.J."/>
            <person name="Tettelin H."/>
            <person name="Blake R. II"/>
            <person name="Eisen J.A."/>
            <person name="Holmes D.S."/>
        </authorList>
    </citation>
    <scope>NUCLEOTIDE SEQUENCE [LARGE SCALE GENOMIC DNA]</scope>
    <source>
        <strain>ATCC 23270 / DSM 14882 / CIP 104768 / NCIMB 8455</strain>
    </source>
</reference>
<dbReference type="EMBL" id="CP001219">
    <property type="protein sequence ID" value="ACK80415.1"/>
    <property type="molecule type" value="Genomic_DNA"/>
</dbReference>
<dbReference type="RefSeq" id="WP_012537695.1">
    <property type="nucleotide sequence ID" value="NC_011761.1"/>
</dbReference>
<dbReference type="SMR" id="B7JBG5"/>
<dbReference type="STRING" id="243159.AFE_3287"/>
<dbReference type="PaxDb" id="243159-AFE_3287"/>
<dbReference type="GeneID" id="65282264"/>
<dbReference type="KEGG" id="afr:AFE_3287"/>
<dbReference type="eggNOG" id="COG0375">
    <property type="taxonomic scope" value="Bacteria"/>
</dbReference>
<dbReference type="HOGENOM" id="CLU_126929_0_0_6"/>
<dbReference type="Proteomes" id="UP000001362">
    <property type="component" value="Chromosome"/>
</dbReference>
<dbReference type="GO" id="GO:0016151">
    <property type="term" value="F:nickel cation binding"/>
    <property type="evidence" value="ECO:0007669"/>
    <property type="project" value="UniProtKB-UniRule"/>
</dbReference>
<dbReference type="GO" id="GO:0008270">
    <property type="term" value="F:zinc ion binding"/>
    <property type="evidence" value="ECO:0007669"/>
    <property type="project" value="UniProtKB-UniRule"/>
</dbReference>
<dbReference type="GO" id="GO:0051604">
    <property type="term" value="P:protein maturation"/>
    <property type="evidence" value="ECO:0007669"/>
    <property type="project" value="InterPro"/>
</dbReference>
<dbReference type="GO" id="GO:0036211">
    <property type="term" value="P:protein modification process"/>
    <property type="evidence" value="ECO:0007669"/>
    <property type="project" value="UniProtKB-UniRule"/>
</dbReference>
<dbReference type="FunFam" id="3.30.2320.80:FF:000001">
    <property type="entry name" value="Hydrogenase maturation factor HypA"/>
    <property type="match status" value="1"/>
</dbReference>
<dbReference type="Gene3D" id="3.30.2320.80">
    <property type="match status" value="1"/>
</dbReference>
<dbReference type="HAMAP" id="MF_00213">
    <property type="entry name" value="HypA_HybF"/>
    <property type="match status" value="1"/>
</dbReference>
<dbReference type="InterPro" id="IPR000688">
    <property type="entry name" value="HypA/HybF"/>
</dbReference>
<dbReference type="NCBIfam" id="TIGR00100">
    <property type="entry name" value="hypA"/>
    <property type="match status" value="1"/>
</dbReference>
<dbReference type="NCBIfam" id="NF009046">
    <property type="entry name" value="PRK12380.1"/>
    <property type="match status" value="1"/>
</dbReference>
<dbReference type="PANTHER" id="PTHR34535">
    <property type="entry name" value="HYDROGENASE MATURATION FACTOR HYPA"/>
    <property type="match status" value="1"/>
</dbReference>
<dbReference type="PANTHER" id="PTHR34535:SF3">
    <property type="entry name" value="HYDROGENASE MATURATION FACTOR HYPA"/>
    <property type="match status" value="1"/>
</dbReference>
<dbReference type="Pfam" id="PF01155">
    <property type="entry name" value="HypA"/>
    <property type="match status" value="1"/>
</dbReference>
<dbReference type="PIRSF" id="PIRSF004761">
    <property type="entry name" value="Hydrgn_mat_HypA"/>
    <property type="match status" value="1"/>
</dbReference>
<accession>B7JBG5</accession>
<evidence type="ECO:0000255" key="1">
    <source>
        <dbReference type="HAMAP-Rule" id="MF_00213"/>
    </source>
</evidence>
<keyword id="KW-0479">Metal-binding</keyword>
<keyword id="KW-0533">Nickel</keyword>
<keyword id="KW-1185">Reference proteome</keyword>
<keyword id="KW-0862">Zinc</keyword>